<feature type="chain" id="PRO_0000136502" description="Phosphoribosyl-AMP cyclohydrolase">
    <location>
        <begin position="1"/>
        <end position="109"/>
    </location>
</feature>
<feature type="binding site" evidence="1">
    <location>
        <position position="76"/>
    </location>
    <ligand>
        <name>Mg(2+)</name>
        <dbReference type="ChEBI" id="CHEBI:18420"/>
    </ligand>
</feature>
<feature type="binding site" evidence="1">
    <location>
        <position position="77"/>
    </location>
    <ligand>
        <name>Zn(2+)</name>
        <dbReference type="ChEBI" id="CHEBI:29105"/>
        <note>ligand shared between dimeric partners</note>
    </ligand>
</feature>
<feature type="binding site" evidence="1">
    <location>
        <position position="78"/>
    </location>
    <ligand>
        <name>Mg(2+)</name>
        <dbReference type="ChEBI" id="CHEBI:18420"/>
    </ligand>
</feature>
<feature type="binding site" evidence="1">
    <location>
        <position position="80"/>
    </location>
    <ligand>
        <name>Mg(2+)</name>
        <dbReference type="ChEBI" id="CHEBI:18420"/>
    </ligand>
</feature>
<feature type="binding site" evidence="1">
    <location>
        <position position="93"/>
    </location>
    <ligand>
        <name>Zn(2+)</name>
        <dbReference type="ChEBI" id="CHEBI:29105"/>
        <note>ligand shared between dimeric partners</note>
    </ligand>
</feature>
<feature type="binding site" evidence="1">
    <location>
        <position position="100"/>
    </location>
    <ligand>
        <name>Zn(2+)</name>
        <dbReference type="ChEBI" id="CHEBI:29105"/>
        <note>ligand shared between dimeric partners</note>
    </ligand>
</feature>
<reference key="1">
    <citation type="journal article" date="2002" name="Proc. Natl. Acad. Sci. U.S.A.">
        <title>Genome sequence of Streptococcus mutans UA159, a cariogenic dental pathogen.</title>
        <authorList>
            <person name="Ajdic D.J."/>
            <person name="McShan W.M."/>
            <person name="McLaughlin R.E."/>
            <person name="Savic G."/>
            <person name="Chang J."/>
            <person name="Carson M.B."/>
            <person name="Primeaux C."/>
            <person name="Tian R."/>
            <person name="Kenton S."/>
            <person name="Jia H.G."/>
            <person name="Lin S.P."/>
            <person name="Qian Y."/>
            <person name="Li S."/>
            <person name="Zhu H."/>
            <person name="Najar F.Z."/>
            <person name="Lai H."/>
            <person name="White J."/>
            <person name="Roe B.A."/>
            <person name="Ferretti J.J."/>
        </authorList>
    </citation>
    <scope>NUCLEOTIDE SEQUENCE [LARGE SCALE GENOMIC DNA]</scope>
    <source>
        <strain>ATCC 700610 / UA159</strain>
    </source>
</reference>
<gene>
    <name evidence="1" type="primary">hisI</name>
    <name type="ordered locus">SMU_1263</name>
</gene>
<dbReference type="EC" id="3.5.4.19" evidence="1"/>
<dbReference type="EMBL" id="AE014133">
    <property type="protein sequence ID" value="AAN58945.1"/>
    <property type="molecule type" value="Genomic_DNA"/>
</dbReference>
<dbReference type="RefSeq" id="NP_721639.1">
    <property type="nucleotide sequence ID" value="NC_004350.2"/>
</dbReference>
<dbReference type="RefSeq" id="WP_002263181.1">
    <property type="nucleotide sequence ID" value="NC_004350.2"/>
</dbReference>
<dbReference type="SMR" id="Q8DTR4"/>
<dbReference type="STRING" id="210007.SMU_1263"/>
<dbReference type="KEGG" id="smu:SMU_1263"/>
<dbReference type="PATRIC" id="fig|210007.7.peg.1132"/>
<dbReference type="eggNOG" id="COG0139">
    <property type="taxonomic scope" value="Bacteria"/>
</dbReference>
<dbReference type="HOGENOM" id="CLU_048577_5_3_9"/>
<dbReference type="OrthoDB" id="9795769at2"/>
<dbReference type="PhylomeDB" id="Q8DTR4"/>
<dbReference type="UniPathway" id="UPA00031">
    <property type="reaction ID" value="UER00008"/>
</dbReference>
<dbReference type="Proteomes" id="UP000002512">
    <property type="component" value="Chromosome"/>
</dbReference>
<dbReference type="GO" id="GO:0005737">
    <property type="term" value="C:cytoplasm"/>
    <property type="evidence" value="ECO:0007669"/>
    <property type="project" value="UniProtKB-SubCell"/>
</dbReference>
<dbReference type="GO" id="GO:0000287">
    <property type="term" value="F:magnesium ion binding"/>
    <property type="evidence" value="ECO:0007669"/>
    <property type="project" value="UniProtKB-UniRule"/>
</dbReference>
<dbReference type="GO" id="GO:0004635">
    <property type="term" value="F:phosphoribosyl-AMP cyclohydrolase activity"/>
    <property type="evidence" value="ECO:0007669"/>
    <property type="project" value="UniProtKB-UniRule"/>
</dbReference>
<dbReference type="GO" id="GO:0008270">
    <property type="term" value="F:zinc ion binding"/>
    <property type="evidence" value="ECO:0007669"/>
    <property type="project" value="UniProtKB-UniRule"/>
</dbReference>
<dbReference type="GO" id="GO:0000105">
    <property type="term" value="P:L-histidine biosynthetic process"/>
    <property type="evidence" value="ECO:0007669"/>
    <property type="project" value="UniProtKB-UniRule"/>
</dbReference>
<dbReference type="FunFam" id="3.10.20.810:FF:000001">
    <property type="entry name" value="Histidine biosynthesis bifunctional protein HisIE"/>
    <property type="match status" value="1"/>
</dbReference>
<dbReference type="Gene3D" id="3.10.20.810">
    <property type="entry name" value="Phosphoribosyl-AMP cyclohydrolase"/>
    <property type="match status" value="1"/>
</dbReference>
<dbReference type="HAMAP" id="MF_01021">
    <property type="entry name" value="HisI"/>
    <property type="match status" value="1"/>
</dbReference>
<dbReference type="InterPro" id="IPR026660">
    <property type="entry name" value="PRA-CH"/>
</dbReference>
<dbReference type="InterPro" id="IPR002496">
    <property type="entry name" value="PRib_AMP_CycHydrolase_dom"/>
</dbReference>
<dbReference type="InterPro" id="IPR038019">
    <property type="entry name" value="PRib_AMP_CycHydrolase_sf"/>
</dbReference>
<dbReference type="NCBIfam" id="NF000768">
    <property type="entry name" value="PRK00051.1"/>
    <property type="match status" value="1"/>
</dbReference>
<dbReference type="PANTHER" id="PTHR42945">
    <property type="entry name" value="HISTIDINE BIOSYNTHESIS BIFUNCTIONAL PROTEIN"/>
    <property type="match status" value="1"/>
</dbReference>
<dbReference type="PANTHER" id="PTHR42945:SF1">
    <property type="entry name" value="HISTIDINE BIOSYNTHESIS BIFUNCTIONAL PROTEIN HIS7"/>
    <property type="match status" value="1"/>
</dbReference>
<dbReference type="Pfam" id="PF01502">
    <property type="entry name" value="PRA-CH"/>
    <property type="match status" value="1"/>
</dbReference>
<dbReference type="SUPFAM" id="SSF141734">
    <property type="entry name" value="HisI-like"/>
    <property type="match status" value="1"/>
</dbReference>
<sequence>MTDLSLDFKKQGGLLPVIVTDFQTGQVLMLAYMNEEAYQKTLDSKEMYYWSRSRNELWHKGDTSGHYQYVKSIKTDCDQDTLLIAVEQVGAACHTGAYSCFFNEIYNPE</sequence>
<proteinExistence type="inferred from homology"/>
<organism>
    <name type="scientific">Streptococcus mutans serotype c (strain ATCC 700610 / UA159)</name>
    <dbReference type="NCBI Taxonomy" id="210007"/>
    <lineage>
        <taxon>Bacteria</taxon>
        <taxon>Bacillati</taxon>
        <taxon>Bacillota</taxon>
        <taxon>Bacilli</taxon>
        <taxon>Lactobacillales</taxon>
        <taxon>Streptococcaceae</taxon>
        <taxon>Streptococcus</taxon>
    </lineage>
</organism>
<comment type="function">
    <text evidence="1">Catalyzes the hydrolysis of the adenine ring of phosphoribosyl-AMP.</text>
</comment>
<comment type="catalytic activity">
    <reaction evidence="1">
        <text>1-(5-phospho-beta-D-ribosyl)-5'-AMP + H2O = 1-(5-phospho-beta-D-ribosyl)-5-[(5-phospho-beta-D-ribosylamino)methylideneamino]imidazole-4-carboxamide</text>
        <dbReference type="Rhea" id="RHEA:20049"/>
        <dbReference type="ChEBI" id="CHEBI:15377"/>
        <dbReference type="ChEBI" id="CHEBI:58435"/>
        <dbReference type="ChEBI" id="CHEBI:59457"/>
        <dbReference type="EC" id="3.5.4.19"/>
    </reaction>
</comment>
<comment type="cofactor">
    <cofactor evidence="1">
        <name>Mg(2+)</name>
        <dbReference type="ChEBI" id="CHEBI:18420"/>
    </cofactor>
    <text evidence="1">Binds 1 Mg(2+) ion per subunit.</text>
</comment>
<comment type="cofactor">
    <cofactor evidence="1">
        <name>Zn(2+)</name>
        <dbReference type="ChEBI" id="CHEBI:29105"/>
    </cofactor>
    <text evidence="1">Binds 1 zinc ion per subunit.</text>
</comment>
<comment type="pathway">
    <text evidence="1">Amino-acid biosynthesis; L-histidine biosynthesis; L-histidine from 5-phospho-alpha-D-ribose 1-diphosphate: step 3/9.</text>
</comment>
<comment type="subunit">
    <text evidence="1">Homodimer.</text>
</comment>
<comment type="subcellular location">
    <subcellularLocation>
        <location evidence="1">Cytoplasm</location>
    </subcellularLocation>
</comment>
<comment type="similarity">
    <text evidence="1">Belongs to the PRA-CH family.</text>
</comment>
<protein>
    <recommendedName>
        <fullName evidence="1">Phosphoribosyl-AMP cyclohydrolase</fullName>
        <shortName evidence="1">PRA-CH</shortName>
        <ecNumber evidence="1">3.5.4.19</ecNumber>
    </recommendedName>
</protein>
<keyword id="KW-0028">Amino-acid biosynthesis</keyword>
<keyword id="KW-0963">Cytoplasm</keyword>
<keyword id="KW-0368">Histidine biosynthesis</keyword>
<keyword id="KW-0378">Hydrolase</keyword>
<keyword id="KW-0460">Magnesium</keyword>
<keyword id="KW-0479">Metal-binding</keyword>
<keyword id="KW-1185">Reference proteome</keyword>
<keyword id="KW-0862">Zinc</keyword>
<accession>Q8DTR4</accession>
<name>HIS3_STRMU</name>
<evidence type="ECO:0000255" key="1">
    <source>
        <dbReference type="HAMAP-Rule" id="MF_01021"/>
    </source>
</evidence>